<accession>Q9JY93</accession>
<keyword id="KW-0963">Cytoplasm</keyword>
<keyword id="KW-0488">Methylation</keyword>
<keyword id="KW-0648">Protein biosynthesis</keyword>
<keyword id="KW-1185">Reference proteome</keyword>
<feature type="chain" id="PRO_0000177714" description="Peptide chain release factor 1">
    <location>
        <begin position="1"/>
        <end position="358"/>
    </location>
</feature>
<feature type="modified residue" description="N5-methylglutamine" evidence="1">
    <location>
        <position position="235"/>
    </location>
</feature>
<dbReference type="EMBL" id="AE002098">
    <property type="protein sequence ID" value="AAF42034.1"/>
    <property type="molecule type" value="Genomic_DNA"/>
</dbReference>
<dbReference type="PIR" id="G81053">
    <property type="entry name" value="G81053"/>
</dbReference>
<dbReference type="RefSeq" id="NP_274690.1">
    <property type="nucleotide sequence ID" value="NC_003112.2"/>
</dbReference>
<dbReference type="RefSeq" id="WP_002222130.1">
    <property type="nucleotide sequence ID" value="NC_003112.2"/>
</dbReference>
<dbReference type="SMR" id="Q9JY93"/>
<dbReference type="FunCoup" id="Q9JY93">
    <property type="interactions" value="436"/>
</dbReference>
<dbReference type="STRING" id="122586.NMB1686"/>
<dbReference type="PaxDb" id="122586-NMB1686"/>
<dbReference type="KEGG" id="nme:NMB1686"/>
<dbReference type="PATRIC" id="fig|122586.8.peg.2168"/>
<dbReference type="HOGENOM" id="CLU_036856_0_1_4"/>
<dbReference type="InParanoid" id="Q9JY93"/>
<dbReference type="OrthoDB" id="9806673at2"/>
<dbReference type="Proteomes" id="UP000000425">
    <property type="component" value="Chromosome"/>
</dbReference>
<dbReference type="GO" id="GO:0005737">
    <property type="term" value="C:cytoplasm"/>
    <property type="evidence" value="ECO:0007669"/>
    <property type="project" value="UniProtKB-SubCell"/>
</dbReference>
<dbReference type="GO" id="GO:0016149">
    <property type="term" value="F:translation release factor activity, codon specific"/>
    <property type="evidence" value="ECO:0007669"/>
    <property type="project" value="UniProtKB-UniRule"/>
</dbReference>
<dbReference type="FunFam" id="3.30.160.20:FF:000004">
    <property type="entry name" value="Peptide chain release factor 1"/>
    <property type="match status" value="1"/>
</dbReference>
<dbReference type="FunFam" id="3.30.70.1660:FF:000002">
    <property type="entry name" value="Peptide chain release factor 1"/>
    <property type="match status" value="1"/>
</dbReference>
<dbReference type="FunFam" id="3.30.70.1660:FF:000004">
    <property type="entry name" value="Peptide chain release factor 1"/>
    <property type="match status" value="1"/>
</dbReference>
<dbReference type="Gene3D" id="3.30.160.20">
    <property type="match status" value="1"/>
</dbReference>
<dbReference type="Gene3D" id="3.30.70.1660">
    <property type="match status" value="2"/>
</dbReference>
<dbReference type="Gene3D" id="6.10.140.1950">
    <property type="match status" value="1"/>
</dbReference>
<dbReference type="HAMAP" id="MF_00093">
    <property type="entry name" value="Rel_fac_1"/>
    <property type="match status" value="1"/>
</dbReference>
<dbReference type="InterPro" id="IPR005139">
    <property type="entry name" value="PCRF"/>
</dbReference>
<dbReference type="InterPro" id="IPR000352">
    <property type="entry name" value="Pep_chain_release_fac_I"/>
</dbReference>
<dbReference type="InterPro" id="IPR045853">
    <property type="entry name" value="Pep_chain_release_fac_I_sf"/>
</dbReference>
<dbReference type="InterPro" id="IPR050057">
    <property type="entry name" value="Prokaryotic/Mito_RF"/>
</dbReference>
<dbReference type="InterPro" id="IPR004373">
    <property type="entry name" value="RF-1"/>
</dbReference>
<dbReference type="NCBIfam" id="TIGR00019">
    <property type="entry name" value="prfA"/>
    <property type="match status" value="1"/>
</dbReference>
<dbReference type="NCBIfam" id="NF001859">
    <property type="entry name" value="PRK00591.1"/>
    <property type="match status" value="1"/>
</dbReference>
<dbReference type="PANTHER" id="PTHR43804">
    <property type="entry name" value="LD18447P"/>
    <property type="match status" value="1"/>
</dbReference>
<dbReference type="PANTHER" id="PTHR43804:SF7">
    <property type="entry name" value="LD18447P"/>
    <property type="match status" value="1"/>
</dbReference>
<dbReference type="Pfam" id="PF03462">
    <property type="entry name" value="PCRF"/>
    <property type="match status" value="1"/>
</dbReference>
<dbReference type="Pfam" id="PF00472">
    <property type="entry name" value="RF-1"/>
    <property type="match status" value="1"/>
</dbReference>
<dbReference type="SMART" id="SM00937">
    <property type="entry name" value="PCRF"/>
    <property type="match status" value="1"/>
</dbReference>
<dbReference type="SUPFAM" id="SSF75620">
    <property type="entry name" value="Release factor"/>
    <property type="match status" value="1"/>
</dbReference>
<dbReference type="PROSITE" id="PS00745">
    <property type="entry name" value="RF_PROK_I"/>
    <property type="match status" value="1"/>
</dbReference>
<gene>
    <name evidence="1" type="primary">prfA</name>
    <name type="ordered locus">NMB1686</name>
</gene>
<protein>
    <recommendedName>
        <fullName evidence="1">Peptide chain release factor 1</fullName>
        <shortName evidence="1">RF-1</shortName>
    </recommendedName>
</protein>
<reference key="1">
    <citation type="journal article" date="2000" name="Science">
        <title>Complete genome sequence of Neisseria meningitidis serogroup B strain MC58.</title>
        <authorList>
            <person name="Tettelin H."/>
            <person name="Saunders N.J."/>
            <person name="Heidelberg J.F."/>
            <person name="Jeffries A.C."/>
            <person name="Nelson K.E."/>
            <person name="Eisen J.A."/>
            <person name="Ketchum K.A."/>
            <person name="Hood D.W."/>
            <person name="Peden J.F."/>
            <person name="Dodson R.J."/>
            <person name="Nelson W.C."/>
            <person name="Gwinn M.L."/>
            <person name="DeBoy R.T."/>
            <person name="Peterson J.D."/>
            <person name="Hickey E.K."/>
            <person name="Haft D.H."/>
            <person name="Salzberg S.L."/>
            <person name="White O."/>
            <person name="Fleischmann R.D."/>
            <person name="Dougherty B.A."/>
            <person name="Mason T.M."/>
            <person name="Ciecko A."/>
            <person name="Parksey D.S."/>
            <person name="Blair E."/>
            <person name="Cittone H."/>
            <person name="Clark E.B."/>
            <person name="Cotton M.D."/>
            <person name="Utterback T.R."/>
            <person name="Khouri H.M."/>
            <person name="Qin H."/>
            <person name="Vamathevan J.J."/>
            <person name="Gill J."/>
            <person name="Scarlato V."/>
            <person name="Masignani V."/>
            <person name="Pizza M."/>
            <person name="Grandi G."/>
            <person name="Sun L."/>
            <person name="Smith H.O."/>
            <person name="Fraser C.M."/>
            <person name="Moxon E.R."/>
            <person name="Rappuoli R."/>
            <person name="Venter J.C."/>
        </authorList>
    </citation>
    <scope>NUCLEOTIDE SEQUENCE [LARGE SCALE GENOMIC DNA]</scope>
    <source>
        <strain>ATCC BAA-335 / MC58</strain>
    </source>
</reference>
<name>RF1_NEIMB</name>
<sequence length="358" mass="39793">MKPSILEKLQQLSDRLEEVTHLLGQPEATSDMDNYRKLTREHAELTPVVEVFQNYRLAQSDLADAEEMLSDPEMKDFAAEEIEAAKAKIGELDTELQKLLLPKDADDDKNIFIEIRAGTGGDEAALFAGDLLRMYSRYAERNRWQVEIVSANESELGGYKEVIARIVGLGAYSRLKFESGGHRVQRVPATESQGRIHTSACTVAVMPEADELEDIELNPADLRIDTFRASGAGGQHINKTDSAVRITHLPTGMVVECQDGRSQHANKAQAMKVLAARLNDAQKREAQAKEAAERKSLIGSGDRSERIRTYNYPQGRVTDHRINLTLHKLDFVMDGDLEEITNALIAEHQAELLAAMGD</sequence>
<organism>
    <name type="scientific">Neisseria meningitidis serogroup B (strain ATCC BAA-335 / MC58)</name>
    <dbReference type="NCBI Taxonomy" id="122586"/>
    <lineage>
        <taxon>Bacteria</taxon>
        <taxon>Pseudomonadati</taxon>
        <taxon>Pseudomonadota</taxon>
        <taxon>Betaproteobacteria</taxon>
        <taxon>Neisseriales</taxon>
        <taxon>Neisseriaceae</taxon>
        <taxon>Neisseria</taxon>
    </lineage>
</organism>
<proteinExistence type="inferred from homology"/>
<evidence type="ECO:0000255" key="1">
    <source>
        <dbReference type="HAMAP-Rule" id="MF_00093"/>
    </source>
</evidence>
<comment type="function">
    <text evidence="1">Peptide chain release factor 1 directs the termination of translation in response to the peptide chain termination codons UAG and UAA.</text>
</comment>
<comment type="subcellular location">
    <subcellularLocation>
        <location evidence="1">Cytoplasm</location>
    </subcellularLocation>
</comment>
<comment type="PTM">
    <text evidence="1">Methylated by PrmC. Methylation increases the termination efficiency of RF1.</text>
</comment>
<comment type="similarity">
    <text evidence="1">Belongs to the prokaryotic/mitochondrial release factor family.</text>
</comment>